<protein>
    <recommendedName>
        <fullName evidence="2">K(+)-insensitive pyrophosphate-energized proton pump</fullName>
        <ecNumber evidence="2">7.1.3.1</ecNumber>
    </recommendedName>
    <alternativeName>
        <fullName evidence="2">Membrane-bound proton-translocating pyrophosphatase</fullName>
    </alternativeName>
    <alternativeName>
        <fullName evidence="2">Pyrophosphate-energized inorganic pyrophosphatase</fullName>
        <shortName evidence="2">H(+)-PPase</shortName>
    </alternativeName>
</protein>
<gene>
    <name evidence="2" type="primary">hppA</name>
    <name type="ordered locus">SAV_4616</name>
</gene>
<name>HPPA_STRAW</name>
<reference key="1">
    <citation type="journal article" date="2001" name="Proc. Natl. Acad. Sci. U.S.A.">
        <title>Genome sequence of an industrial microorganism Streptomyces avermitilis: deducing the ability of producing secondary metabolites.</title>
        <authorList>
            <person name="Omura S."/>
            <person name="Ikeda H."/>
            <person name="Ishikawa J."/>
            <person name="Hanamoto A."/>
            <person name="Takahashi C."/>
            <person name="Shinose M."/>
            <person name="Takahashi Y."/>
            <person name="Horikawa H."/>
            <person name="Nakazawa H."/>
            <person name="Osonoe T."/>
            <person name="Kikuchi H."/>
            <person name="Shiba T."/>
            <person name="Sakaki Y."/>
            <person name="Hattori M."/>
        </authorList>
    </citation>
    <scope>NUCLEOTIDE SEQUENCE [LARGE SCALE GENOMIC DNA]</scope>
    <source>
        <strain>ATCC 31267 / DSM 46492 / JCM 5070 / NBRC 14893 / NCIMB 12804 / NRRL 8165 / MA-4680</strain>
    </source>
</reference>
<reference key="2">
    <citation type="journal article" date="2003" name="Nat. Biotechnol.">
        <title>Complete genome sequence and comparative analysis of the industrial microorganism Streptomyces avermitilis.</title>
        <authorList>
            <person name="Ikeda H."/>
            <person name="Ishikawa J."/>
            <person name="Hanamoto A."/>
            <person name="Shinose M."/>
            <person name="Kikuchi H."/>
            <person name="Shiba T."/>
            <person name="Sakaki Y."/>
            <person name="Hattori M."/>
            <person name="Omura S."/>
        </authorList>
    </citation>
    <scope>NUCLEOTIDE SEQUENCE [LARGE SCALE GENOMIC DNA]</scope>
    <source>
        <strain>ATCC 31267 / DSM 46492 / JCM 5070 / NBRC 14893 / NCIMB 12804 / NRRL 8165 / MA-4680</strain>
    </source>
</reference>
<keyword id="KW-0106">Calcium</keyword>
<keyword id="KW-1003">Cell membrane</keyword>
<keyword id="KW-0375">Hydrogen ion transport</keyword>
<keyword id="KW-0406">Ion transport</keyword>
<keyword id="KW-0460">Magnesium</keyword>
<keyword id="KW-0472">Membrane</keyword>
<keyword id="KW-0479">Metal-binding</keyword>
<keyword id="KW-1185">Reference proteome</keyword>
<keyword id="KW-1278">Translocase</keyword>
<keyword id="KW-0812">Transmembrane</keyword>
<keyword id="KW-1133">Transmembrane helix</keyword>
<keyword id="KW-0813">Transport</keyword>
<accession>Q82EJ8</accession>
<comment type="function">
    <text evidence="2">Proton pump that utilizes the energy of pyrophosphate hydrolysis as the driving force for proton movement across the membrane. Generates a proton motive force.</text>
</comment>
<comment type="catalytic activity">
    <reaction evidence="2">
        <text>diphosphate + H2O + H(+)(in) = 2 phosphate + 2 H(+)(out)</text>
        <dbReference type="Rhea" id="RHEA:13973"/>
        <dbReference type="ChEBI" id="CHEBI:15377"/>
        <dbReference type="ChEBI" id="CHEBI:15378"/>
        <dbReference type="ChEBI" id="CHEBI:33019"/>
        <dbReference type="ChEBI" id="CHEBI:43474"/>
        <dbReference type="EC" id="7.1.3.1"/>
    </reaction>
</comment>
<comment type="cofactor">
    <cofactor evidence="2">
        <name>Mg(2+)</name>
        <dbReference type="ChEBI" id="CHEBI:18420"/>
    </cofactor>
</comment>
<comment type="subunit">
    <text evidence="2">Homodimer.</text>
</comment>
<comment type="subcellular location">
    <subcellularLocation>
        <location evidence="2">Cell membrane</location>
        <topology evidence="2">Multi-pass membrane protein</topology>
    </subcellularLocation>
</comment>
<comment type="similarity">
    <text evidence="2">Belongs to the H(+)-translocating pyrophosphatase (TC 3.A.10) family. K(+)-insensitive subfamily.</text>
</comment>
<dbReference type="EC" id="7.1.3.1" evidence="2"/>
<dbReference type="EMBL" id="BA000030">
    <property type="protein sequence ID" value="BAC72328.1"/>
    <property type="molecule type" value="Genomic_DNA"/>
</dbReference>
<dbReference type="RefSeq" id="WP_010986040.1">
    <property type="nucleotide sequence ID" value="NZ_JZJK01000062.1"/>
</dbReference>
<dbReference type="SMR" id="Q82EJ8"/>
<dbReference type="GeneID" id="41541696"/>
<dbReference type="KEGG" id="sma:SAVERM_4616"/>
<dbReference type="eggNOG" id="COG3808">
    <property type="taxonomic scope" value="Bacteria"/>
</dbReference>
<dbReference type="HOGENOM" id="CLU_008743_3_1_11"/>
<dbReference type="OrthoDB" id="9808652at2"/>
<dbReference type="Proteomes" id="UP000000428">
    <property type="component" value="Chromosome"/>
</dbReference>
<dbReference type="GO" id="GO:0005886">
    <property type="term" value="C:plasma membrane"/>
    <property type="evidence" value="ECO:0007669"/>
    <property type="project" value="UniProtKB-SubCell"/>
</dbReference>
<dbReference type="GO" id="GO:0009678">
    <property type="term" value="F:diphosphate hydrolysis-driven proton transmembrane transporter activity"/>
    <property type="evidence" value="ECO:0007669"/>
    <property type="project" value="UniProtKB-UniRule"/>
</dbReference>
<dbReference type="GO" id="GO:0004427">
    <property type="term" value="F:inorganic diphosphate phosphatase activity"/>
    <property type="evidence" value="ECO:0007669"/>
    <property type="project" value="UniProtKB-UniRule"/>
</dbReference>
<dbReference type="GO" id="GO:0000287">
    <property type="term" value="F:magnesium ion binding"/>
    <property type="evidence" value="ECO:0007669"/>
    <property type="project" value="UniProtKB-UniRule"/>
</dbReference>
<dbReference type="HAMAP" id="MF_01129">
    <property type="entry name" value="PPase_energized_pump"/>
    <property type="match status" value="1"/>
</dbReference>
<dbReference type="InterPro" id="IPR004131">
    <property type="entry name" value="PPase-energised_H-pump"/>
</dbReference>
<dbReference type="NCBIfam" id="NF001952">
    <property type="entry name" value="PRK00733.1-4"/>
    <property type="match status" value="1"/>
</dbReference>
<dbReference type="NCBIfam" id="NF001960">
    <property type="entry name" value="PRK00733.3-5"/>
    <property type="match status" value="1"/>
</dbReference>
<dbReference type="NCBIfam" id="TIGR01104">
    <property type="entry name" value="V_PPase"/>
    <property type="match status" value="1"/>
</dbReference>
<dbReference type="PANTHER" id="PTHR31998">
    <property type="entry name" value="K(+)-INSENSITIVE PYROPHOSPHATE-ENERGIZED PROTON PUMP"/>
    <property type="match status" value="1"/>
</dbReference>
<dbReference type="Pfam" id="PF03030">
    <property type="entry name" value="H_PPase"/>
    <property type="match status" value="1"/>
</dbReference>
<dbReference type="PIRSF" id="PIRSF001265">
    <property type="entry name" value="H+-PPase"/>
    <property type="match status" value="1"/>
</dbReference>
<sequence length="801" mass="81610">MAGLSTPHQFDHPTALAAAVLTDDNRVIVMVIGVVALAALVVAGILVRQVLAAGEGTDSMKKIAAAVQEGANAYLGRQMRTLGVFAVVVFFLLMLLPADDWNQRAGRSVFFLIGALFSATTGYTGMWLAVRSNVRVAAAAREATPAEGEPEKDLTAVSHKAMKIAFRTGGVVGMFTVGLGLLGASCVVLVYAADAPKVLEGFGLGAALIAMFMRVGGGIFTKAADVGADLVGKVEQGIPEDDPRNAATIADNVGDNVGDCAGMAADLFESYAVTLVAALILGKAAFGDSGLAFPLIVPAIGVLTAMIGIFAVAPRRADRSGMSAINRGFFVSAVFSLALVAVAVYVYLPGKYADLDGVTDVAIRAKDGDPRILAMVAVAIGIVLAALIQQLTGYFTETTRRPVRDIGKSSLTGAATVVLAGISVGLESAVYTALLIGLGVYGAFLLGGTSIMLALFAVALAGTGLLTTVGVIVAMDTFGPVSDNAQGIAEMSGDVTGAGAQVLTDLDAVGNTTKAITKGIAIATAVLAASALFGSYRDAITTAANDVGEKVSGAGAPMNLMMDISQPNNLVGLIAGAAVVFLFSGLAINAVSRSAGAVVYEVRRQFREHPGIMDYTEQPEYGRVVDICTKDALRELATPGLLAVLAPIAIGFTLGVGALGAYLAGAIGTGTLMAVFLANSGGAWDNAKKLVEDGHHGGKGSEAHAATVIGDTVGDPFKDTAGPAINPLLKVMNLVALLIAPAVVKFSYGEDKNLGVRIAIAVLSILVIVGAVYISKRRGIAVGDEGNAERVTKSADPAVVS</sequence>
<proteinExistence type="inferred from homology"/>
<feature type="chain" id="PRO_0000217031" description="K(+)-insensitive pyrophosphate-energized proton pump">
    <location>
        <begin position="1"/>
        <end position="801"/>
    </location>
</feature>
<feature type="transmembrane region" description="Helical" evidence="2">
    <location>
        <begin position="27"/>
        <end position="47"/>
    </location>
</feature>
<feature type="transmembrane region" description="Helical" evidence="2">
    <location>
        <begin position="81"/>
        <end position="101"/>
    </location>
</feature>
<feature type="transmembrane region" description="Helical" evidence="2">
    <location>
        <begin position="109"/>
        <end position="129"/>
    </location>
</feature>
<feature type="transmembrane region" description="Helical" evidence="2">
    <location>
        <begin position="170"/>
        <end position="190"/>
    </location>
</feature>
<feature type="transmembrane region" description="Helical" evidence="2">
    <location>
        <begin position="201"/>
        <end position="221"/>
    </location>
</feature>
<feature type="transmembrane region" description="Helical" evidence="2">
    <location>
        <begin position="261"/>
        <end position="281"/>
    </location>
</feature>
<feature type="transmembrane region" description="Helical" evidence="2">
    <location>
        <begin position="292"/>
        <end position="312"/>
    </location>
</feature>
<feature type="transmembrane region" description="Helical" evidence="2">
    <location>
        <begin position="328"/>
        <end position="348"/>
    </location>
</feature>
<feature type="transmembrane region" description="Helical" evidence="2">
    <location>
        <begin position="372"/>
        <end position="392"/>
    </location>
</feature>
<feature type="transmembrane region" description="Helical" evidence="2">
    <location>
        <begin position="406"/>
        <end position="426"/>
    </location>
</feature>
<feature type="transmembrane region" description="Helical" evidence="2">
    <location>
        <begin position="429"/>
        <end position="449"/>
    </location>
</feature>
<feature type="transmembrane region" description="Helical" evidence="2">
    <location>
        <begin position="453"/>
        <end position="473"/>
    </location>
</feature>
<feature type="transmembrane region" description="Helical" evidence="2">
    <location>
        <begin position="515"/>
        <end position="535"/>
    </location>
</feature>
<feature type="transmembrane region" description="Helical" evidence="2">
    <location>
        <begin position="571"/>
        <end position="591"/>
    </location>
</feature>
<feature type="transmembrane region" description="Helical" evidence="2">
    <location>
        <begin position="641"/>
        <end position="661"/>
    </location>
</feature>
<feature type="transmembrane region" description="Helical" evidence="2">
    <location>
        <begin position="663"/>
        <end position="683"/>
    </location>
</feature>
<feature type="transmembrane region" description="Helical" evidence="2">
    <location>
        <begin position="724"/>
        <end position="744"/>
    </location>
</feature>
<feature type="transmembrane region" description="Helical" evidence="2">
    <location>
        <begin position="754"/>
        <end position="774"/>
    </location>
</feature>
<feature type="binding site" evidence="1">
    <location>
        <position position="222"/>
    </location>
    <ligand>
        <name>substrate</name>
    </ligand>
</feature>
<feature type="binding site" evidence="1">
    <location>
        <position position="225"/>
    </location>
    <ligand>
        <name>Mg(2+)</name>
        <dbReference type="ChEBI" id="CHEBI:18420"/>
        <label>1</label>
    </ligand>
</feature>
<feature type="binding site" evidence="1">
    <location>
        <position position="229"/>
    </location>
    <ligand>
        <name>Mg(2+)</name>
        <dbReference type="ChEBI" id="CHEBI:18420"/>
        <label>1</label>
    </ligand>
</feature>
<feature type="binding site" evidence="1">
    <location>
        <position position="252"/>
    </location>
    <ligand>
        <name>Mg(2+)</name>
        <dbReference type="ChEBI" id="CHEBI:18420"/>
        <label>2</label>
    </ligand>
</feature>
<feature type="binding site" evidence="1">
    <location>
        <position position="255"/>
    </location>
    <ligand>
        <name>Mg(2+)</name>
        <dbReference type="ChEBI" id="CHEBI:18420"/>
        <label>2</label>
    </ligand>
</feature>
<feature type="binding site" evidence="1">
    <location>
        <position position="483"/>
    </location>
    <ligand>
        <name>Mg(2+)</name>
        <dbReference type="ChEBI" id="CHEBI:18420"/>
        <label>2</label>
    </ligand>
</feature>
<feature type="binding site" evidence="1">
    <location>
        <position position="685"/>
    </location>
    <ligand>
        <name>Ca(2+)</name>
        <dbReference type="ChEBI" id="CHEBI:29108"/>
    </ligand>
</feature>
<feature type="binding site" evidence="1">
    <location>
        <position position="711"/>
    </location>
    <ligand>
        <name>Ca(2+)</name>
        <dbReference type="ChEBI" id="CHEBI:29108"/>
    </ligand>
</feature>
<feature type="binding site" evidence="1">
    <location>
        <position position="715"/>
    </location>
    <ligand>
        <name>Ca(2+)</name>
        <dbReference type="ChEBI" id="CHEBI:29108"/>
    </ligand>
</feature>
<feature type="binding site" evidence="1">
    <location>
        <position position="718"/>
    </location>
    <ligand>
        <name>substrate</name>
    </ligand>
</feature>
<feature type="site" description="Important for ion transport" evidence="1">
    <location>
        <position position="214"/>
    </location>
</feature>
<feature type="site" description="Important for ion transport" evidence="1">
    <location>
        <position position="259"/>
    </location>
</feature>
<feature type="site" description="Important for ion transport" evidence="1">
    <location>
        <position position="266"/>
    </location>
</feature>
<feature type="site" description="Determinant of potassium independence" evidence="2">
    <location>
        <position position="514"/>
    </location>
</feature>
<feature type="site" description="Important for ion transport" evidence="1">
    <location>
        <position position="719"/>
    </location>
</feature>
<feature type="site" description="Important for ion transport" evidence="1">
    <location>
        <position position="730"/>
    </location>
</feature>
<evidence type="ECO:0000250" key="1"/>
<evidence type="ECO:0000255" key="2">
    <source>
        <dbReference type="HAMAP-Rule" id="MF_01129"/>
    </source>
</evidence>
<organism>
    <name type="scientific">Streptomyces avermitilis (strain ATCC 31267 / DSM 46492 / JCM 5070 / NBRC 14893 / NCIMB 12804 / NRRL 8165 / MA-4680)</name>
    <dbReference type="NCBI Taxonomy" id="227882"/>
    <lineage>
        <taxon>Bacteria</taxon>
        <taxon>Bacillati</taxon>
        <taxon>Actinomycetota</taxon>
        <taxon>Actinomycetes</taxon>
        <taxon>Kitasatosporales</taxon>
        <taxon>Streptomycetaceae</taxon>
        <taxon>Streptomyces</taxon>
    </lineage>
</organism>